<gene>
    <name type="primary">CAF1-5</name>
    <name type="ordered locus">At1g61470</name>
    <name type="ORF">T1F9.4</name>
</gene>
<organism>
    <name type="scientific">Arabidopsis thaliana</name>
    <name type="common">Mouse-ear cress</name>
    <dbReference type="NCBI Taxonomy" id="3702"/>
    <lineage>
        <taxon>Eukaryota</taxon>
        <taxon>Viridiplantae</taxon>
        <taxon>Streptophyta</taxon>
        <taxon>Embryophyta</taxon>
        <taxon>Tracheophyta</taxon>
        <taxon>Spermatophyta</taxon>
        <taxon>Magnoliopsida</taxon>
        <taxon>eudicotyledons</taxon>
        <taxon>Gunneridae</taxon>
        <taxon>Pentapetalae</taxon>
        <taxon>rosids</taxon>
        <taxon>malvids</taxon>
        <taxon>Brassicales</taxon>
        <taxon>Brassicaceae</taxon>
        <taxon>Camelineae</taxon>
        <taxon>Arabidopsis</taxon>
    </lineage>
</organism>
<comment type="function">
    <text evidence="1">Ubiquitous transcription factor required for a diverse set of processes. It is a component of the CCR4 complex involved in the control of gene expression (By similarity).</text>
</comment>
<comment type="catalytic activity">
    <reaction>
        <text>Exonucleolytic cleavage of poly(A) to 5'-AMP.</text>
        <dbReference type="EC" id="3.1.13.4"/>
    </reaction>
</comment>
<comment type="cofactor">
    <cofactor evidence="1">
        <name>a divalent metal cation</name>
        <dbReference type="ChEBI" id="CHEBI:60240"/>
    </cofactor>
</comment>
<comment type="subunit">
    <text evidence="1">Component of the CCR4-NOT complex, at least composed of CRR4 and CAF1 proteins.</text>
</comment>
<comment type="subcellular location">
    <subcellularLocation>
        <location evidence="1">Nucleus</location>
    </subcellularLocation>
    <subcellularLocation>
        <location evidence="1">Cytoplasm</location>
    </subcellularLocation>
</comment>
<comment type="similarity">
    <text evidence="2">Belongs to the CAF1 family.</text>
</comment>
<keyword id="KW-0963">Cytoplasm</keyword>
<keyword id="KW-0269">Exonuclease</keyword>
<keyword id="KW-0378">Hydrolase</keyword>
<keyword id="KW-0479">Metal-binding</keyword>
<keyword id="KW-0540">Nuclease</keyword>
<keyword id="KW-0539">Nucleus</keyword>
<keyword id="KW-1185">Reference proteome</keyword>
<keyword id="KW-0694">RNA-binding</keyword>
<keyword id="KW-0804">Transcription</keyword>
<keyword id="KW-0805">Transcription regulation</keyword>
<protein>
    <recommendedName>
        <fullName>Probable CCR4-associated factor 1 homolog 5</fullName>
        <ecNumber>3.1.13.4</ecNumber>
    </recommendedName>
</protein>
<feature type="chain" id="PRO_0000371555" description="Probable CCR4-associated factor 1 homolog 5">
    <location>
        <begin position="1"/>
        <end position="278"/>
    </location>
</feature>
<feature type="binding site" evidence="1">
    <location>
        <position position="30"/>
    </location>
    <ligand>
        <name>a divalent metal cation</name>
        <dbReference type="ChEBI" id="CHEBI:60240"/>
        <note>catalytic</note>
    </ligand>
</feature>
<feature type="binding site" evidence="1">
    <location>
        <position position="32"/>
    </location>
    <ligand>
        <name>a divalent metal cation</name>
        <dbReference type="ChEBI" id="CHEBI:60240"/>
        <note>catalytic</note>
    </ligand>
</feature>
<feature type="binding site" evidence="1">
    <location>
        <position position="145"/>
    </location>
    <ligand>
        <name>a divalent metal cation</name>
        <dbReference type="ChEBI" id="CHEBI:60240"/>
        <note>catalytic</note>
    </ligand>
</feature>
<feature type="binding site" evidence="1">
    <location>
        <position position="217"/>
    </location>
    <ligand>
        <name>a divalent metal cation</name>
        <dbReference type="ChEBI" id="CHEBI:60240"/>
        <note>catalytic</note>
    </ligand>
</feature>
<accession>O64773</accession>
<sequence>MSGEVWRWNKQAEMNSIRDCLKHCNSIAIDTEFPGCLKETPMDASDEIRYRDMKFNVDNTHLIQLGLTLFGKGITKTWEINLSDFNESKSLKNDKSIAFLKNNGLDLDKIREEGIGIEEFFMEFSQILNEKHGKMRWVTFQGSYDKAYLLKGLTRKPLPETSKEFDETVQQLLGRFVYDVKKMAGLCSGLSSRFGLQRIADVLQMRRVGKAHHAGSDSELTARVFTKLIFDLVNSRKESTGRRADDQQYQLEQQQHQQQLMMTRCYIPIPVQGRNYVL</sequence>
<name>CAF1E_ARATH</name>
<dbReference type="EC" id="3.1.13.4"/>
<dbReference type="EMBL" id="AC004255">
    <property type="protein sequence ID" value="AAC13894.1"/>
    <property type="molecule type" value="Genomic_DNA"/>
</dbReference>
<dbReference type="EMBL" id="CP002684">
    <property type="protein sequence ID" value="AEE33841.1"/>
    <property type="molecule type" value="Genomic_DNA"/>
</dbReference>
<dbReference type="PIR" id="H96639">
    <property type="entry name" value="H96639"/>
</dbReference>
<dbReference type="RefSeq" id="NP_176342.1">
    <property type="nucleotide sequence ID" value="NM_104828.2"/>
</dbReference>
<dbReference type="SMR" id="O64773"/>
<dbReference type="FunCoup" id="O64773">
    <property type="interactions" value="112"/>
</dbReference>
<dbReference type="STRING" id="3702.O64773"/>
<dbReference type="PaxDb" id="3702-AT1G61470.1"/>
<dbReference type="DNASU" id="842441"/>
<dbReference type="EnsemblPlants" id="AT1G61470.1">
    <property type="protein sequence ID" value="AT1G61470.1"/>
    <property type="gene ID" value="AT1G61470"/>
</dbReference>
<dbReference type="GeneID" id="842441"/>
<dbReference type="Gramene" id="AT1G61470.1">
    <property type="protein sequence ID" value="AT1G61470.1"/>
    <property type="gene ID" value="AT1G61470"/>
</dbReference>
<dbReference type="KEGG" id="ath:AT1G61470"/>
<dbReference type="Araport" id="AT1G61470"/>
<dbReference type="TAIR" id="AT1G61470">
    <property type="gene designation" value="CAF1E"/>
</dbReference>
<dbReference type="eggNOG" id="KOG0304">
    <property type="taxonomic scope" value="Eukaryota"/>
</dbReference>
<dbReference type="HOGENOM" id="CLU_027974_1_3_1"/>
<dbReference type="InParanoid" id="O64773"/>
<dbReference type="OMA" id="MLAGHKS"/>
<dbReference type="PhylomeDB" id="O64773"/>
<dbReference type="PRO" id="PR:O64773"/>
<dbReference type="Proteomes" id="UP000006548">
    <property type="component" value="Chromosome 1"/>
</dbReference>
<dbReference type="ExpressionAtlas" id="O64773">
    <property type="expression patterns" value="baseline and differential"/>
</dbReference>
<dbReference type="GO" id="GO:0030014">
    <property type="term" value="C:CCR4-NOT complex"/>
    <property type="evidence" value="ECO:0007669"/>
    <property type="project" value="InterPro"/>
</dbReference>
<dbReference type="GO" id="GO:0005737">
    <property type="term" value="C:cytoplasm"/>
    <property type="evidence" value="ECO:0007669"/>
    <property type="project" value="UniProtKB-SubCell"/>
</dbReference>
<dbReference type="GO" id="GO:0005634">
    <property type="term" value="C:nucleus"/>
    <property type="evidence" value="ECO:0007669"/>
    <property type="project" value="UniProtKB-SubCell"/>
</dbReference>
<dbReference type="GO" id="GO:0046872">
    <property type="term" value="F:metal ion binding"/>
    <property type="evidence" value="ECO:0007669"/>
    <property type="project" value="UniProtKB-KW"/>
</dbReference>
<dbReference type="GO" id="GO:0004535">
    <property type="term" value="F:poly(A)-specific ribonuclease activity"/>
    <property type="evidence" value="ECO:0007669"/>
    <property type="project" value="UniProtKB-EC"/>
</dbReference>
<dbReference type="GO" id="GO:0003723">
    <property type="term" value="F:RNA binding"/>
    <property type="evidence" value="ECO:0007669"/>
    <property type="project" value="UniProtKB-KW"/>
</dbReference>
<dbReference type="FunFam" id="3.30.420.10:FF:000223">
    <property type="entry name" value="Probable CCR4-associated factor 1 homolog 5"/>
    <property type="match status" value="1"/>
</dbReference>
<dbReference type="Gene3D" id="3.30.420.10">
    <property type="entry name" value="Ribonuclease H-like superfamily/Ribonuclease H"/>
    <property type="match status" value="1"/>
</dbReference>
<dbReference type="InterPro" id="IPR039637">
    <property type="entry name" value="CNOT7/CNOT8/Pop2"/>
</dbReference>
<dbReference type="InterPro" id="IPR006941">
    <property type="entry name" value="RNase_CAF1"/>
</dbReference>
<dbReference type="InterPro" id="IPR012337">
    <property type="entry name" value="RNaseH-like_sf"/>
</dbReference>
<dbReference type="InterPro" id="IPR036397">
    <property type="entry name" value="RNaseH_sf"/>
</dbReference>
<dbReference type="PANTHER" id="PTHR10797">
    <property type="entry name" value="CCR4-NOT TRANSCRIPTION COMPLEX SUBUNIT"/>
    <property type="match status" value="1"/>
</dbReference>
<dbReference type="Pfam" id="PF04857">
    <property type="entry name" value="CAF1"/>
    <property type="match status" value="1"/>
</dbReference>
<dbReference type="SUPFAM" id="SSF53098">
    <property type="entry name" value="Ribonuclease H-like"/>
    <property type="match status" value="1"/>
</dbReference>
<proteinExistence type="evidence at transcript level"/>
<reference key="1">
    <citation type="journal article" date="2000" name="Nature">
        <title>Sequence and analysis of chromosome 1 of the plant Arabidopsis thaliana.</title>
        <authorList>
            <person name="Theologis A."/>
            <person name="Ecker J.R."/>
            <person name="Palm C.J."/>
            <person name="Federspiel N.A."/>
            <person name="Kaul S."/>
            <person name="White O."/>
            <person name="Alonso J."/>
            <person name="Altafi H."/>
            <person name="Araujo R."/>
            <person name="Bowman C.L."/>
            <person name="Brooks S.Y."/>
            <person name="Buehler E."/>
            <person name="Chan A."/>
            <person name="Chao Q."/>
            <person name="Chen H."/>
            <person name="Cheuk R.F."/>
            <person name="Chin C.W."/>
            <person name="Chung M.K."/>
            <person name="Conn L."/>
            <person name="Conway A.B."/>
            <person name="Conway A.R."/>
            <person name="Creasy T.H."/>
            <person name="Dewar K."/>
            <person name="Dunn P."/>
            <person name="Etgu P."/>
            <person name="Feldblyum T.V."/>
            <person name="Feng J.-D."/>
            <person name="Fong B."/>
            <person name="Fujii C.Y."/>
            <person name="Gill J.E."/>
            <person name="Goldsmith A.D."/>
            <person name="Haas B."/>
            <person name="Hansen N.F."/>
            <person name="Hughes B."/>
            <person name="Huizar L."/>
            <person name="Hunter J.L."/>
            <person name="Jenkins J."/>
            <person name="Johnson-Hopson C."/>
            <person name="Khan S."/>
            <person name="Khaykin E."/>
            <person name="Kim C.J."/>
            <person name="Koo H.L."/>
            <person name="Kremenetskaia I."/>
            <person name="Kurtz D.B."/>
            <person name="Kwan A."/>
            <person name="Lam B."/>
            <person name="Langin-Hooper S."/>
            <person name="Lee A."/>
            <person name="Lee J.M."/>
            <person name="Lenz C.A."/>
            <person name="Li J.H."/>
            <person name="Li Y.-P."/>
            <person name="Lin X."/>
            <person name="Liu S.X."/>
            <person name="Liu Z.A."/>
            <person name="Luros J.S."/>
            <person name="Maiti R."/>
            <person name="Marziali A."/>
            <person name="Militscher J."/>
            <person name="Miranda M."/>
            <person name="Nguyen M."/>
            <person name="Nierman W.C."/>
            <person name="Osborne B.I."/>
            <person name="Pai G."/>
            <person name="Peterson J."/>
            <person name="Pham P.K."/>
            <person name="Rizzo M."/>
            <person name="Rooney T."/>
            <person name="Rowley D."/>
            <person name="Sakano H."/>
            <person name="Salzberg S.L."/>
            <person name="Schwartz J.R."/>
            <person name="Shinn P."/>
            <person name="Southwick A.M."/>
            <person name="Sun H."/>
            <person name="Tallon L.J."/>
            <person name="Tambunga G."/>
            <person name="Toriumi M.J."/>
            <person name="Town C.D."/>
            <person name="Utterback T."/>
            <person name="Van Aken S."/>
            <person name="Vaysberg M."/>
            <person name="Vysotskaia V.S."/>
            <person name="Walker M."/>
            <person name="Wu D."/>
            <person name="Yu G."/>
            <person name="Fraser C.M."/>
            <person name="Venter J.C."/>
            <person name="Davis R.W."/>
        </authorList>
    </citation>
    <scope>NUCLEOTIDE SEQUENCE [LARGE SCALE GENOMIC DNA]</scope>
    <source>
        <strain>cv. Columbia</strain>
    </source>
</reference>
<reference key="2">
    <citation type="journal article" date="2017" name="Plant J.">
        <title>Araport11: a complete reannotation of the Arabidopsis thaliana reference genome.</title>
        <authorList>
            <person name="Cheng C.Y."/>
            <person name="Krishnakumar V."/>
            <person name="Chan A.P."/>
            <person name="Thibaud-Nissen F."/>
            <person name="Schobel S."/>
            <person name="Town C.D."/>
        </authorList>
    </citation>
    <scope>GENOME REANNOTATION</scope>
    <source>
        <strain>cv. Columbia</strain>
    </source>
</reference>
<evidence type="ECO:0000250" key="1"/>
<evidence type="ECO:0000305" key="2"/>